<name>FOS_PHOCM</name>
<feature type="chain" id="PRO_0000254957" description="Protein c-Fos">
    <location>
        <begin position="1"/>
        <end position="381"/>
    </location>
</feature>
<feature type="domain" description="bZIP" evidence="5">
    <location>
        <begin position="137"/>
        <end position="200"/>
    </location>
</feature>
<feature type="region of interest" description="Basic motif; required for the activation of phospholipid synthesis, but not for CDS1-binding" evidence="5">
    <location>
        <begin position="139"/>
        <end position="159"/>
    </location>
</feature>
<feature type="region of interest" description="Leucine-zipper" evidence="5">
    <location>
        <begin position="165"/>
        <end position="193"/>
    </location>
</feature>
<feature type="region of interest" description="Disordered" evidence="6">
    <location>
        <begin position="223"/>
        <end position="251"/>
    </location>
</feature>
<feature type="region of interest" description="Disordered" evidence="6">
    <location>
        <begin position="355"/>
        <end position="381"/>
    </location>
</feature>
<feature type="compositionally biased region" description="Low complexity" evidence="6">
    <location>
        <begin position="363"/>
        <end position="375"/>
    </location>
</feature>
<feature type="modified residue" description="Phosphotyrosine; by SRC" evidence="2">
    <location>
        <position position="10"/>
    </location>
</feature>
<feature type="modified residue" description="Phosphotyrosine; by SRC" evidence="2">
    <location>
        <position position="30"/>
    </location>
</feature>
<feature type="modified residue" description="Phosphothreonine" evidence="3">
    <location>
        <position position="232"/>
    </location>
</feature>
<feature type="modified residue" description="Phosphothreonine; by MAPK1 and MAPK3" evidence="2">
    <location>
        <position position="326"/>
    </location>
</feature>
<feature type="modified residue" description="Phosphothreonine; by MAPK1 and MAPK3" evidence="2">
    <location>
        <position position="332"/>
    </location>
</feature>
<feature type="modified residue" description="Phosphoserine; by MAPK1, MAPK3 and RPS6KA3" evidence="2">
    <location>
        <position position="363"/>
    </location>
</feature>
<feature type="modified residue" description="Phosphoserine; by MAPK1 and MAPK3" evidence="2">
    <location>
        <position position="375"/>
    </location>
</feature>
<feature type="cross-link" description="Glycyl lysine isopeptide (Lys-Gly) (interchain with G-Cter in SUMO2)" evidence="2">
    <location>
        <position position="113"/>
    </location>
</feature>
<feature type="cross-link" description="Glycyl lysine isopeptide (Lys-Gly) (interchain with G-Cter in SUMO2)" evidence="2">
    <location>
        <position position="128"/>
    </location>
</feature>
<feature type="cross-link" description="Glycyl lysine isopeptide (Lys-Gly) (interchain with G-Cter in SUMO); alternate" evidence="1">
    <location>
        <position position="265"/>
    </location>
</feature>
<feature type="cross-link" description="Glycyl lysine isopeptide (Lys-Gly) (interchain with G-Cter in SUMO2); alternate" evidence="2">
    <location>
        <position position="265"/>
    </location>
</feature>
<evidence type="ECO:0000250" key="1"/>
<evidence type="ECO:0000250" key="2">
    <source>
        <dbReference type="UniProtKB" id="P01100"/>
    </source>
</evidence>
<evidence type="ECO:0000250" key="3">
    <source>
        <dbReference type="UniProtKB" id="P01101"/>
    </source>
</evidence>
<evidence type="ECO:0000250" key="4">
    <source>
        <dbReference type="UniProtKB" id="P12841"/>
    </source>
</evidence>
<evidence type="ECO:0000255" key="5">
    <source>
        <dbReference type="PROSITE-ProRule" id="PRU00978"/>
    </source>
</evidence>
<evidence type="ECO:0000256" key="6">
    <source>
        <dbReference type="SAM" id="MobiDB-lite"/>
    </source>
</evidence>
<evidence type="ECO:0000305" key="7"/>
<accession>Q56TT7</accession>
<keyword id="KW-0963">Cytoplasm</keyword>
<keyword id="KW-0238">DNA-binding</keyword>
<keyword id="KW-0256">Endoplasmic reticulum</keyword>
<keyword id="KW-1017">Isopeptide bond</keyword>
<keyword id="KW-0539">Nucleus</keyword>
<keyword id="KW-0597">Phosphoprotein</keyword>
<keyword id="KW-0656">Proto-oncogene</keyword>
<keyword id="KW-0832">Ubl conjugation</keyword>
<proteinExistence type="inferred from homology"/>
<comment type="function">
    <text evidence="1">Nuclear phosphoprotein which forms a tight but non-covalently linked complex with the JUN/AP-1 transcription factor. On TGF-beta activation, forms a multimeric SMAD3/SMAD4/JUN/FOS complex, at the AP1/SMAD-binding site to regulate TGF-beta-mediated signaling. Has a critical function in regulating the development of cells destined to form and maintain the skeleton. It is thought to have an important role in signal transduction, cell proliferation and differentiation (By similarity). In growing cells, activates phospholipid synthesis, possibly by activating CDS1 and PI4K2A. This activity requires Tyr-dephosphorylation and association with the endoplasmic reticulum (By similarity).</text>
</comment>
<comment type="subunit">
    <text evidence="2 3 4">Heterodimer; with JUN (By similarity). Component of the SMAD3/SMAD4/JUN/FOS complex required for synergistic TGF-beta-mediated transcription at the AP1-binding site (By similarity). Interacts with SMAD3; the interaction is weak even on TGF-beta activation (By similarity). Interacts with MAFB (By similarity). Interacts with TSC22D3 (via N-terminus); this interaction inhibits the binding of active AP1 to its target DNA (By similarity). Interacts with CDS1 and PI4K2A (By similarity). Interacts (via bZIP domain and leucine-zipper region) with the multiprotein chromatin-remodeling complexes SWI/SNF: SWI/SNF-A (BAF) subunits SMARCB1, SMARCC2 and SMARCD1 (By similarity). Interacts (via bZIP domain and leucine-zipper region) with ARID1A (By similarity).</text>
</comment>
<comment type="subcellular location">
    <subcellularLocation>
        <location evidence="5">Nucleus</location>
    </subcellularLocation>
    <subcellularLocation>
        <location evidence="1">Endoplasmic reticulum</location>
    </subcellularLocation>
    <subcellularLocation>
        <location evidence="1">Cytoplasm</location>
        <location evidence="1">Cytosol</location>
    </subcellularLocation>
    <text evidence="1">In quiescent cells, present in very small amounts in the cytosol. Following induction of cell growth, first localizes to the endoplasmic reticulum and only later to the nucleus. Localization at the endoplasmic reticulum requires dephosphorylation at Tyr-10 and Tyr-30 (By similarity).</text>
</comment>
<comment type="PTM">
    <text evidence="1">Phosphorylated in the C-terminal upon stimulation by nerve growth factor (NGF) and epidermal growth factor (EGF). Phosphorylated, in vitro, by MAPK and RSK1. Phosphorylation on both Ser-363 and Ser-375 by MAPK1/2 and RSK1/2 leads to protein stabilization with phosphorylation on Ser-375 being the major site for protein stabilization on NGF stimulation. Phosphorylation on Ser-363 and Ser-375 primes further phosphorylations on Thr-326 and Thr-332 through promoting docking of MAPK to the DEF domain. Phosphorylation on Thr-232, induced by HA-RAS, activates the transcriptional activity and antagonizes sumoylation. Phosphorylation on Ser-363 by RSK2 in osteoblasts contributes to osteoblast transformation (By similarity).</text>
</comment>
<comment type="PTM">
    <text evidence="1">Constitutively sumoylated with SUMO1, SUMO2 and SUMO3. Desumoylated by SENP2. Sumoylation requires heterodimerization with JUN and is enhanced by mitogen stimulation. Sumoylation inhibits the AP-1 transcriptional activity and is, itself, inhibited by Ras-activated phosphorylation on Thr-232 (By similarity).</text>
</comment>
<comment type="PTM">
    <text evidence="1">In quiescent cells, the small amount of FOS present is phosphorylated at Tyr-10 and Tyr-30 by SRC. This Tyr-phosphorylated form is cytosolic. In growing cells, dephosphorylated by PTPN2. Dephosphorylation leads to the association with endoplasmic reticulum membranes and activation of phospholipid synthesis (By similarity).</text>
</comment>
<comment type="similarity">
    <text evidence="7">Belongs to the bZIP family. Fos subfamily.</text>
</comment>
<reference key="1">
    <citation type="submission" date="2004-03" db="EMBL/GenBank/DDBJ databases">
        <title>Expression of c-FOS in dwarf hamster Phodopus campbelli.</title>
        <authorList>
            <person name="Weiler E."/>
        </authorList>
    </citation>
    <scope>NUCLEOTIDE SEQUENCE [GENOMIC DNA]</scope>
</reference>
<sequence>MMFSGFNAEYEASSSRCSSASPAGDSLSYYHSPADSFSSMGSPVNAQDFCADLSVSSANFIPTVTAISTSPDLQWLVQPTLVSSVAPSQTRAPHPYGVPTPPTGAYSRAGMVKTVSGGRAQSIGRRGKVEQLSPEEEEKRRIRRERNKMAAAKCRNRRRELTDTLQAETDHLEDEKSALQTEIANLLKEKEKLEFILAAHRPACKIPDDLGFPEDMSVASLDLTGGLPEATTPESEEAFSLPLLNDPEPKTSLEPVKSISNMELKAEPFDDFLFPASSRPSGSETTARSVPDMDLSGSFYAADWEPLHSSSLGMGPMATELEPLCTPVVTCTPSCTTYTSSFVFTYPEADSFPSCAAAHRKGSSSNEPSSDSLSSPTLLAL</sequence>
<organism>
    <name type="scientific">Phodopus campbelli</name>
    <name type="common">Campbell's dwarf Russian hamster</name>
    <dbReference type="NCBI Taxonomy" id="47665"/>
    <lineage>
        <taxon>Eukaryota</taxon>
        <taxon>Metazoa</taxon>
        <taxon>Chordata</taxon>
        <taxon>Craniata</taxon>
        <taxon>Vertebrata</taxon>
        <taxon>Euteleostomi</taxon>
        <taxon>Mammalia</taxon>
        <taxon>Eutheria</taxon>
        <taxon>Euarchontoglires</taxon>
        <taxon>Glires</taxon>
        <taxon>Rodentia</taxon>
        <taxon>Myomorpha</taxon>
        <taxon>Muroidea</taxon>
        <taxon>Cricetidae</taxon>
        <taxon>Cricetinae</taxon>
        <taxon>Phodopus</taxon>
    </lineage>
</organism>
<gene>
    <name type="primary">FOS</name>
</gene>
<dbReference type="EMBL" id="AY585680">
    <property type="protein sequence ID" value="AAU00056.1"/>
    <property type="molecule type" value="Genomic_DNA"/>
</dbReference>
<dbReference type="SMR" id="Q56TT7"/>
<dbReference type="GO" id="GO:0005829">
    <property type="term" value="C:cytosol"/>
    <property type="evidence" value="ECO:0007669"/>
    <property type="project" value="UniProtKB-SubCell"/>
</dbReference>
<dbReference type="GO" id="GO:0005783">
    <property type="term" value="C:endoplasmic reticulum"/>
    <property type="evidence" value="ECO:0007669"/>
    <property type="project" value="UniProtKB-SubCell"/>
</dbReference>
<dbReference type="GO" id="GO:0005634">
    <property type="term" value="C:nucleus"/>
    <property type="evidence" value="ECO:0007669"/>
    <property type="project" value="UniProtKB-SubCell"/>
</dbReference>
<dbReference type="GO" id="GO:0000981">
    <property type="term" value="F:DNA-binding transcription factor activity, RNA polymerase II-specific"/>
    <property type="evidence" value="ECO:0007669"/>
    <property type="project" value="TreeGrafter"/>
</dbReference>
<dbReference type="GO" id="GO:0000978">
    <property type="term" value="F:RNA polymerase II cis-regulatory region sequence-specific DNA binding"/>
    <property type="evidence" value="ECO:0007669"/>
    <property type="project" value="TreeGrafter"/>
</dbReference>
<dbReference type="CDD" id="cd14721">
    <property type="entry name" value="bZIP_Fos"/>
    <property type="match status" value="1"/>
</dbReference>
<dbReference type="FunFam" id="1.20.5.170:FF:000006">
    <property type="entry name" value="fos-related antigen 2 isoform X1"/>
    <property type="match status" value="1"/>
</dbReference>
<dbReference type="Gene3D" id="1.20.5.170">
    <property type="match status" value="1"/>
</dbReference>
<dbReference type="InterPro" id="IPR000837">
    <property type="entry name" value="AP-1"/>
</dbReference>
<dbReference type="InterPro" id="IPR004827">
    <property type="entry name" value="bZIP"/>
</dbReference>
<dbReference type="InterPro" id="IPR046347">
    <property type="entry name" value="bZIP_sf"/>
</dbReference>
<dbReference type="PANTHER" id="PTHR23351">
    <property type="entry name" value="FOS TRANSCRIPTION FACTOR-RELATED"/>
    <property type="match status" value="1"/>
</dbReference>
<dbReference type="PANTHER" id="PTHR23351:SF4">
    <property type="entry name" value="PROTEIN C-FOS"/>
    <property type="match status" value="1"/>
</dbReference>
<dbReference type="Pfam" id="PF00170">
    <property type="entry name" value="bZIP_1"/>
    <property type="match status" value="1"/>
</dbReference>
<dbReference type="PRINTS" id="PR00042">
    <property type="entry name" value="LEUZIPPRFOS"/>
</dbReference>
<dbReference type="SMART" id="SM00338">
    <property type="entry name" value="BRLZ"/>
    <property type="match status" value="1"/>
</dbReference>
<dbReference type="SUPFAM" id="SSF57959">
    <property type="entry name" value="Leucine zipper domain"/>
    <property type="match status" value="1"/>
</dbReference>
<dbReference type="PROSITE" id="PS50217">
    <property type="entry name" value="BZIP"/>
    <property type="match status" value="1"/>
</dbReference>
<dbReference type="PROSITE" id="PS00036">
    <property type="entry name" value="BZIP_BASIC"/>
    <property type="match status" value="1"/>
</dbReference>
<protein>
    <recommendedName>
        <fullName evidence="7">Protein c-Fos</fullName>
    </recommendedName>
    <alternativeName>
        <fullName>Cellular oncogene fos</fullName>
    </alternativeName>
    <alternativeName>
        <fullName evidence="7">Transcription factor AP-1 subunit c-Fos</fullName>
    </alternativeName>
</protein>